<dbReference type="EC" id="2.4.2.59" evidence="1"/>
<dbReference type="EMBL" id="CP000660">
    <property type="protein sequence ID" value="ABP51054.1"/>
    <property type="status" value="ALT_INIT"/>
    <property type="molecule type" value="Genomic_DNA"/>
</dbReference>
<dbReference type="SMR" id="A4WKY7"/>
<dbReference type="STRING" id="340102.Pars_1498"/>
<dbReference type="KEGG" id="pas:Pars_1498"/>
<dbReference type="HOGENOM" id="CLU_053727_2_0_2"/>
<dbReference type="OrthoDB" id="4240at2157"/>
<dbReference type="UniPathway" id="UPA00060"/>
<dbReference type="Proteomes" id="UP000001567">
    <property type="component" value="Chromosome"/>
</dbReference>
<dbReference type="GO" id="GO:0005506">
    <property type="term" value="F:iron ion binding"/>
    <property type="evidence" value="ECO:0007669"/>
    <property type="project" value="UniProtKB-UniRule"/>
</dbReference>
<dbReference type="GO" id="GO:0016763">
    <property type="term" value="F:pentosyltransferase activity"/>
    <property type="evidence" value="ECO:0007669"/>
    <property type="project" value="UniProtKB-UniRule"/>
</dbReference>
<dbReference type="GO" id="GO:0009228">
    <property type="term" value="P:thiamine biosynthetic process"/>
    <property type="evidence" value="ECO:0007669"/>
    <property type="project" value="UniProtKB-KW"/>
</dbReference>
<dbReference type="GO" id="GO:0009229">
    <property type="term" value="P:thiamine diphosphate biosynthetic process"/>
    <property type="evidence" value="ECO:0007669"/>
    <property type="project" value="UniProtKB-UniRule"/>
</dbReference>
<dbReference type="GO" id="GO:0052837">
    <property type="term" value="P:thiazole biosynthetic process"/>
    <property type="evidence" value="ECO:0007669"/>
    <property type="project" value="UniProtKB-UniRule"/>
</dbReference>
<dbReference type="Gene3D" id="3.50.50.60">
    <property type="entry name" value="FAD/NAD(P)-binding domain"/>
    <property type="match status" value="1"/>
</dbReference>
<dbReference type="HAMAP" id="MF_00304">
    <property type="entry name" value="Thi4"/>
    <property type="match status" value="1"/>
</dbReference>
<dbReference type="InterPro" id="IPR036188">
    <property type="entry name" value="FAD/NAD-bd_sf"/>
</dbReference>
<dbReference type="InterPro" id="IPR002922">
    <property type="entry name" value="Thi4_fam"/>
</dbReference>
<dbReference type="InterPro" id="IPR022828">
    <property type="entry name" value="Thi4_prok"/>
</dbReference>
<dbReference type="NCBIfam" id="TIGR00292">
    <property type="entry name" value="sulfide-dependent adenosine diphosphate thiazole synthase"/>
    <property type="match status" value="1"/>
</dbReference>
<dbReference type="PANTHER" id="PTHR43422">
    <property type="entry name" value="THIAMINE THIAZOLE SYNTHASE"/>
    <property type="match status" value="1"/>
</dbReference>
<dbReference type="PANTHER" id="PTHR43422:SF3">
    <property type="entry name" value="THIAMINE THIAZOLE SYNTHASE"/>
    <property type="match status" value="1"/>
</dbReference>
<dbReference type="Pfam" id="PF01946">
    <property type="entry name" value="Thi4"/>
    <property type="match status" value="1"/>
</dbReference>
<dbReference type="PRINTS" id="PR00419">
    <property type="entry name" value="ADXRDTASE"/>
</dbReference>
<dbReference type="SUPFAM" id="SSF51905">
    <property type="entry name" value="FAD/NAD(P)-binding domain"/>
    <property type="match status" value="1"/>
</dbReference>
<name>THI4_PYRAR</name>
<feature type="chain" id="PRO_0000322221" description="Thiamine thiazole synthase">
    <location>
        <begin position="1"/>
        <end position="261"/>
    </location>
</feature>
<feature type="binding site" description="in other chain" evidence="1">
    <location>
        <position position="33"/>
    </location>
    <ligand>
        <name>NAD(+)</name>
        <dbReference type="ChEBI" id="CHEBI:57540"/>
        <note>ligand shared between two adjacent protomers</note>
    </ligand>
</feature>
<feature type="binding site" description="in other chain" evidence="1">
    <location>
        <begin position="52"/>
        <end position="53"/>
    </location>
    <ligand>
        <name>NAD(+)</name>
        <dbReference type="ChEBI" id="CHEBI:57540"/>
        <note>ligand shared between two adjacent protomers</note>
    </ligand>
</feature>
<feature type="binding site" description="in other chain" evidence="1">
    <location>
        <position position="60"/>
    </location>
    <ligand>
        <name>NAD(+)</name>
        <dbReference type="ChEBI" id="CHEBI:57540"/>
        <note>ligand shared between two adjacent protomers</note>
    </ligand>
</feature>
<feature type="binding site" description="in other chain" evidence="1">
    <location>
        <position position="124"/>
    </location>
    <ligand>
        <name>NAD(+)</name>
        <dbReference type="ChEBI" id="CHEBI:57540"/>
        <note>ligand shared between two adjacent protomers</note>
    </ligand>
</feature>
<feature type="binding site" evidence="1">
    <location>
        <begin position="152"/>
        <end position="154"/>
    </location>
    <ligand>
        <name>NAD(+)</name>
        <dbReference type="ChEBI" id="CHEBI:57540"/>
        <note>ligand shared between two adjacent protomers</note>
    </ligand>
</feature>
<feature type="binding site" evidence="1">
    <location>
        <position position="154"/>
    </location>
    <ligand>
        <name>Fe cation</name>
        <dbReference type="ChEBI" id="CHEBI:24875"/>
        <note>ligand shared between two adjacent protomers</note>
    </ligand>
</feature>
<feature type="binding site" description="in other chain" evidence="1">
    <location>
        <position position="169"/>
    </location>
    <ligand>
        <name>Fe cation</name>
        <dbReference type="ChEBI" id="CHEBI:24875"/>
        <note>ligand shared between two adjacent protomers</note>
    </ligand>
</feature>
<feature type="binding site" description="in other chain" evidence="1">
    <location>
        <position position="219"/>
    </location>
    <ligand>
        <name>NAD(+)</name>
        <dbReference type="ChEBI" id="CHEBI:57540"/>
        <note>ligand shared between two adjacent protomers</note>
    </ligand>
</feature>
<feature type="binding site" evidence="1">
    <location>
        <position position="229"/>
    </location>
    <ligand>
        <name>glycine</name>
        <dbReference type="ChEBI" id="CHEBI:57305"/>
    </ligand>
</feature>
<organism>
    <name type="scientific">Pyrobaculum arsenaticum (strain DSM 13514 / JCM 11321 / PZ6)</name>
    <dbReference type="NCBI Taxonomy" id="340102"/>
    <lineage>
        <taxon>Archaea</taxon>
        <taxon>Thermoproteota</taxon>
        <taxon>Thermoprotei</taxon>
        <taxon>Thermoproteales</taxon>
        <taxon>Thermoproteaceae</taxon>
        <taxon>Pyrobaculum</taxon>
    </lineage>
</organism>
<gene>
    <name evidence="1" type="primary">thi4</name>
    <name type="ordered locus">Pars_1498</name>
</gene>
<sequence>MELKIGRAIIKKGLEVLYEYSDVDVAIVGAGPSGLTAARYLAEKGFKVLVFERRFSFGGGIGPGGNMLPSIVVQEEALPILRDFKVRYQPAGDGLYTVDPAELIAKLAAGAIDAGAKIILGVHVDDVIFRGDPPRVAGLLWIWTPIQMSGMHVDPLYTMAKAVIDATGHDAEVISVAARKVPELGIQLPGEKSAWSEVSEKLVVEYTGKVAPGLYVTGMAVAAVHGLPRMGPIFGGMMLSGKKIAEIVAKDLAEEAYALRA</sequence>
<accession>A4WKY7</accession>
<protein>
    <recommendedName>
        <fullName evidence="1">Thiamine thiazole synthase</fullName>
        <ecNumber evidence="1">2.4.2.59</ecNumber>
    </recommendedName>
</protein>
<evidence type="ECO:0000255" key="1">
    <source>
        <dbReference type="HAMAP-Rule" id="MF_00304"/>
    </source>
</evidence>
<evidence type="ECO:0000305" key="2"/>
<reference key="1">
    <citation type="submission" date="2007-04" db="EMBL/GenBank/DDBJ databases">
        <title>Complete sequence of Pyrobaculum arsenaticum DSM 13514.</title>
        <authorList>
            <consortium name="US DOE Joint Genome Institute"/>
            <person name="Copeland A."/>
            <person name="Lucas S."/>
            <person name="Lapidus A."/>
            <person name="Barry K."/>
            <person name="Glavina del Rio T."/>
            <person name="Dalin E."/>
            <person name="Tice H."/>
            <person name="Pitluck S."/>
            <person name="Chain P."/>
            <person name="Malfatti S."/>
            <person name="Shin M."/>
            <person name="Vergez L."/>
            <person name="Schmutz J."/>
            <person name="Larimer F."/>
            <person name="Land M."/>
            <person name="Hauser L."/>
            <person name="Kyrpides N."/>
            <person name="Mikhailova N."/>
            <person name="Cozen A.E."/>
            <person name="Fitz-Gibbon S.T."/>
            <person name="House C.H."/>
            <person name="Saltikov C."/>
            <person name="Lowe T.M."/>
            <person name="Richardson P."/>
        </authorList>
    </citation>
    <scope>NUCLEOTIDE SEQUENCE [LARGE SCALE GENOMIC DNA]</scope>
    <source>
        <strain>ATCC 700994 / DSM 13514 / JCM 11321 / PZ6</strain>
    </source>
</reference>
<comment type="function">
    <text evidence="1">Involved in the biosynthesis of the thiazole moiety of thiamine. Catalyzes the conversion of NAD and glycine to adenosine diphosphate 5-(2-hydroxyethyl)-4-methylthiazole-2-carboxylate (ADT), an adenylated thiazole intermediate, using free sulfide as a source of sulfur.</text>
</comment>
<comment type="catalytic activity">
    <reaction evidence="1">
        <text>hydrogen sulfide + glycine + NAD(+) = ADP-5-ethyl-4-methylthiazole-2-carboxylate + nicotinamide + 3 H2O + H(+)</text>
        <dbReference type="Rhea" id="RHEA:55704"/>
        <dbReference type="ChEBI" id="CHEBI:15377"/>
        <dbReference type="ChEBI" id="CHEBI:15378"/>
        <dbReference type="ChEBI" id="CHEBI:17154"/>
        <dbReference type="ChEBI" id="CHEBI:29919"/>
        <dbReference type="ChEBI" id="CHEBI:57305"/>
        <dbReference type="ChEBI" id="CHEBI:57540"/>
        <dbReference type="ChEBI" id="CHEBI:139151"/>
        <dbReference type="EC" id="2.4.2.59"/>
    </reaction>
</comment>
<comment type="cofactor">
    <cofactor evidence="1">
        <name>Fe(2+)</name>
        <dbReference type="ChEBI" id="CHEBI:29033"/>
    </cofactor>
</comment>
<comment type="pathway">
    <text evidence="1">Cofactor biosynthesis; thiamine diphosphate biosynthesis.</text>
</comment>
<comment type="subunit">
    <text evidence="1">Homooctamer; tetramer of dimers.</text>
</comment>
<comment type="similarity">
    <text evidence="1">Belongs to the THI4 family.</text>
</comment>
<comment type="sequence caution" evidence="2">
    <conflict type="erroneous initiation">
        <sequence resource="EMBL-CDS" id="ABP51054"/>
    </conflict>
</comment>
<proteinExistence type="inferred from homology"/>
<keyword id="KW-0408">Iron</keyword>
<keyword id="KW-0479">Metal-binding</keyword>
<keyword id="KW-0520">NAD</keyword>
<keyword id="KW-0784">Thiamine biosynthesis</keyword>
<keyword id="KW-0808">Transferase</keyword>